<protein>
    <recommendedName>
        <fullName evidence="1">Large ribosomal subunit protein uL2</fullName>
    </recommendedName>
    <alternativeName>
        <fullName evidence="3">50S ribosomal protein L2</fullName>
    </alternativeName>
</protein>
<evidence type="ECO:0000255" key="1">
    <source>
        <dbReference type="HAMAP-Rule" id="MF_01320"/>
    </source>
</evidence>
<evidence type="ECO:0000256" key="2">
    <source>
        <dbReference type="SAM" id="MobiDB-lite"/>
    </source>
</evidence>
<evidence type="ECO:0000305" key="3"/>
<sequence length="280" mass="30437">MAIRKYKPTSPGRRGASVSDFSEVTRSTPEKSLVRPLHGHGGRNAHGRITTRHKGGGHKRAYRVIDFRRNDKDGVNAKVAHIEYDPNRTANIALLHFLDGEKRYIIAPQGLSQGDVVESGPNADIKPGNNLPLRNIPAGTVIHAVELRPGGGAKLARSAGSSIQLLGKEGSYASLRMPSGEIRRVDVRCRATVGEVGNAEQANINWGKAGRMRWKGKRPSVRGVVMNPVDHPHGGGEGKTSGGRHPVSPWGKPEGRTRHPNKASNKLIVRRRRTGKKHGR</sequence>
<organism>
    <name type="scientific">Mycobacterium avium (strain 104)</name>
    <dbReference type="NCBI Taxonomy" id="243243"/>
    <lineage>
        <taxon>Bacteria</taxon>
        <taxon>Bacillati</taxon>
        <taxon>Actinomycetota</taxon>
        <taxon>Actinomycetes</taxon>
        <taxon>Mycobacteriales</taxon>
        <taxon>Mycobacteriaceae</taxon>
        <taxon>Mycobacterium</taxon>
        <taxon>Mycobacterium avium complex (MAC)</taxon>
    </lineage>
</organism>
<proteinExistence type="inferred from homology"/>
<feature type="chain" id="PRO_0000309956" description="Large ribosomal subunit protein uL2">
    <location>
        <begin position="1"/>
        <end position="280"/>
    </location>
</feature>
<feature type="region of interest" description="Disordered" evidence="2">
    <location>
        <begin position="1"/>
        <end position="58"/>
    </location>
</feature>
<feature type="region of interest" description="Disordered" evidence="2">
    <location>
        <begin position="226"/>
        <end position="280"/>
    </location>
</feature>
<feature type="compositionally biased region" description="Basic residues" evidence="2">
    <location>
        <begin position="37"/>
        <end position="58"/>
    </location>
</feature>
<feature type="compositionally biased region" description="Basic residues" evidence="2">
    <location>
        <begin position="268"/>
        <end position="280"/>
    </location>
</feature>
<name>RL2_MYCA1</name>
<reference key="1">
    <citation type="submission" date="2006-10" db="EMBL/GenBank/DDBJ databases">
        <authorList>
            <person name="Fleischmann R.D."/>
            <person name="Dodson R.J."/>
            <person name="Haft D.H."/>
            <person name="Merkel J.S."/>
            <person name="Nelson W.C."/>
            <person name="Fraser C.M."/>
        </authorList>
    </citation>
    <scope>NUCLEOTIDE SEQUENCE [LARGE SCALE GENOMIC DNA]</scope>
    <source>
        <strain>104</strain>
    </source>
</reference>
<comment type="function">
    <text evidence="1">One of the primary rRNA binding proteins. Required for association of the 30S and 50S subunits to form the 70S ribosome, for tRNA binding and peptide bond formation. It has been suggested to have peptidyltransferase activity; this is somewhat controversial. Makes several contacts with the 16S rRNA in the 70S ribosome.</text>
</comment>
<comment type="subunit">
    <text evidence="1">Part of the 50S ribosomal subunit. Forms a bridge to the 30S subunit in the 70S ribosome.</text>
</comment>
<comment type="similarity">
    <text evidence="1">Belongs to the universal ribosomal protein uL2 family.</text>
</comment>
<gene>
    <name evidence="1" type="primary">rplB</name>
    <name type="ordered locus">MAV_4468</name>
</gene>
<accession>A0QL15</accession>
<keyword id="KW-0687">Ribonucleoprotein</keyword>
<keyword id="KW-0689">Ribosomal protein</keyword>
<keyword id="KW-0694">RNA-binding</keyword>
<keyword id="KW-0699">rRNA-binding</keyword>
<dbReference type="EMBL" id="CP000479">
    <property type="protein sequence ID" value="ABK67966.1"/>
    <property type="molecule type" value="Genomic_DNA"/>
</dbReference>
<dbReference type="RefSeq" id="WP_003873515.1">
    <property type="nucleotide sequence ID" value="NC_008595.1"/>
</dbReference>
<dbReference type="SMR" id="A0QL15"/>
<dbReference type="GeneID" id="75271982"/>
<dbReference type="KEGG" id="mav:MAV_4468"/>
<dbReference type="HOGENOM" id="CLU_036235_2_1_11"/>
<dbReference type="Proteomes" id="UP000001574">
    <property type="component" value="Chromosome"/>
</dbReference>
<dbReference type="GO" id="GO:0015934">
    <property type="term" value="C:large ribosomal subunit"/>
    <property type="evidence" value="ECO:0007669"/>
    <property type="project" value="InterPro"/>
</dbReference>
<dbReference type="GO" id="GO:0019843">
    <property type="term" value="F:rRNA binding"/>
    <property type="evidence" value="ECO:0007669"/>
    <property type="project" value="UniProtKB-UniRule"/>
</dbReference>
<dbReference type="GO" id="GO:0003735">
    <property type="term" value="F:structural constituent of ribosome"/>
    <property type="evidence" value="ECO:0007669"/>
    <property type="project" value="InterPro"/>
</dbReference>
<dbReference type="GO" id="GO:0016740">
    <property type="term" value="F:transferase activity"/>
    <property type="evidence" value="ECO:0007669"/>
    <property type="project" value="InterPro"/>
</dbReference>
<dbReference type="GO" id="GO:0002181">
    <property type="term" value="P:cytoplasmic translation"/>
    <property type="evidence" value="ECO:0007669"/>
    <property type="project" value="TreeGrafter"/>
</dbReference>
<dbReference type="FunFam" id="2.30.30.30:FF:000001">
    <property type="entry name" value="50S ribosomal protein L2"/>
    <property type="match status" value="1"/>
</dbReference>
<dbReference type="FunFam" id="2.40.50.140:FF:000003">
    <property type="entry name" value="50S ribosomal protein L2"/>
    <property type="match status" value="1"/>
</dbReference>
<dbReference type="FunFam" id="4.10.950.10:FF:000001">
    <property type="entry name" value="50S ribosomal protein L2"/>
    <property type="match status" value="1"/>
</dbReference>
<dbReference type="Gene3D" id="2.30.30.30">
    <property type="match status" value="1"/>
</dbReference>
<dbReference type="Gene3D" id="2.40.50.140">
    <property type="entry name" value="Nucleic acid-binding proteins"/>
    <property type="match status" value="1"/>
</dbReference>
<dbReference type="Gene3D" id="4.10.950.10">
    <property type="entry name" value="Ribosomal protein L2, domain 3"/>
    <property type="match status" value="1"/>
</dbReference>
<dbReference type="HAMAP" id="MF_01320_B">
    <property type="entry name" value="Ribosomal_uL2_B"/>
    <property type="match status" value="1"/>
</dbReference>
<dbReference type="InterPro" id="IPR012340">
    <property type="entry name" value="NA-bd_OB-fold"/>
</dbReference>
<dbReference type="InterPro" id="IPR014722">
    <property type="entry name" value="Rib_uL2_dom2"/>
</dbReference>
<dbReference type="InterPro" id="IPR002171">
    <property type="entry name" value="Ribosomal_uL2"/>
</dbReference>
<dbReference type="InterPro" id="IPR005880">
    <property type="entry name" value="Ribosomal_uL2_bac/org-type"/>
</dbReference>
<dbReference type="InterPro" id="IPR022669">
    <property type="entry name" value="Ribosomal_uL2_C"/>
</dbReference>
<dbReference type="InterPro" id="IPR022671">
    <property type="entry name" value="Ribosomal_uL2_CS"/>
</dbReference>
<dbReference type="InterPro" id="IPR014726">
    <property type="entry name" value="Ribosomal_uL2_dom3"/>
</dbReference>
<dbReference type="InterPro" id="IPR022666">
    <property type="entry name" value="Ribosomal_uL2_RNA-bd_dom"/>
</dbReference>
<dbReference type="InterPro" id="IPR008991">
    <property type="entry name" value="Translation_prot_SH3-like_sf"/>
</dbReference>
<dbReference type="NCBIfam" id="TIGR01171">
    <property type="entry name" value="rplB_bact"/>
    <property type="match status" value="1"/>
</dbReference>
<dbReference type="PANTHER" id="PTHR13691:SF5">
    <property type="entry name" value="LARGE RIBOSOMAL SUBUNIT PROTEIN UL2M"/>
    <property type="match status" value="1"/>
</dbReference>
<dbReference type="PANTHER" id="PTHR13691">
    <property type="entry name" value="RIBOSOMAL PROTEIN L2"/>
    <property type="match status" value="1"/>
</dbReference>
<dbReference type="Pfam" id="PF00181">
    <property type="entry name" value="Ribosomal_L2"/>
    <property type="match status" value="1"/>
</dbReference>
<dbReference type="Pfam" id="PF03947">
    <property type="entry name" value="Ribosomal_L2_C"/>
    <property type="match status" value="1"/>
</dbReference>
<dbReference type="PIRSF" id="PIRSF002158">
    <property type="entry name" value="Ribosomal_L2"/>
    <property type="match status" value="1"/>
</dbReference>
<dbReference type="SMART" id="SM01383">
    <property type="entry name" value="Ribosomal_L2"/>
    <property type="match status" value="1"/>
</dbReference>
<dbReference type="SMART" id="SM01382">
    <property type="entry name" value="Ribosomal_L2_C"/>
    <property type="match status" value="1"/>
</dbReference>
<dbReference type="SUPFAM" id="SSF50249">
    <property type="entry name" value="Nucleic acid-binding proteins"/>
    <property type="match status" value="1"/>
</dbReference>
<dbReference type="SUPFAM" id="SSF50104">
    <property type="entry name" value="Translation proteins SH3-like domain"/>
    <property type="match status" value="1"/>
</dbReference>
<dbReference type="PROSITE" id="PS00467">
    <property type="entry name" value="RIBOSOMAL_L2"/>
    <property type="match status" value="1"/>
</dbReference>